<reference key="1">
    <citation type="submission" date="2009-01" db="EMBL/GenBank/DDBJ databases">
        <title>Complete sequence of Chloroflexus sp. Y-400-fl.</title>
        <authorList>
            <consortium name="US DOE Joint Genome Institute"/>
            <person name="Lucas S."/>
            <person name="Copeland A."/>
            <person name="Lapidus A."/>
            <person name="Glavina del Rio T."/>
            <person name="Dalin E."/>
            <person name="Tice H."/>
            <person name="Bruce D."/>
            <person name="Goodwin L."/>
            <person name="Pitluck S."/>
            <person name="Sims D."/>
            <person name="Kiss H."/>
            <person name="Brettin T."/>
            <person name="Detter J.C."/>
            <person name="Han C."/>
            <person name="Larimer F."/>
            <person name="Land M."/>
            <person name="Hauser L."/>
            <person name="Kyrpides N."/>
            <person name="Ovchinnikova G."/>
            <person name="Bryant D.A."/>
            <person name="Richardson P."/>
        </authorList>
    </citation>
    <scope>NUCLEOTIDE SEQUENCE [LARGE SCALE GENOMIC DNA]</scope>
    <source>
        <strain>ATCC 29364 / DSM 637 / Y-400-fl</strain>
    </source>
</reference>
<comment type="function">
    <text evidence="1">Catalyzes the transfer of a dimethylallyl group onto the adenine at position 37 in tRNAs that read codons beginning with uridine, leading to the formation of N6-(dimethylallyl)adenosine (i(6)A).</text>
</comment>
<comment type="catalytic activity">
    <reaction evidence="1">
        <text>adenosine(37) in tRNA + dimethylallyl diphosphate = N(6)-dimethylallyladenosine(37) in tRNA + diphosphate</text>
        <dbReference type="Rhea" id="RHEA:26482"/>
        <dbReference type="Rhea" id="RHEA-COMP:10162"/>
        <dbReference type="Rhea" id="RHEA-COMP:10375"/>
        <dbReference type="ChEBI" id="CHEBI:33019"/>
        <dbReference type="ChEBI" id="CHEBI:57623"/>
        <dbReference type="ChEBI" id="CHEBI:74411"/>
        <dbReference type="ChEBI" id="CHEBI:74415"/>
        <dbReference type="EC" id="2.5.1.75"/>
    </reaction>
</comment>
<comment type="cofactor">
    <cofactor evidence="1">
        <name>Mg(2+)</name>
        <dbReference type="ChEBI" id="CHEBI:18420"/>
    </cofactor>
</comment>
<comment type="subunit">
    <text evidence="1">Monomer.</text>
</comment>
<comment type="similarity">
    <text evidence="1">Belongs to the IPP transferase family.</text>
</comment>
<protein>
    <recommendedName>
        <fullName evidence="1">tRNA dimethylallyltransferase</fullName>
        <ecNumber evidence="1">2.5.1.75</ecNumber>
    </recommendedName>
    <alternativeName>
        <fullName evidence="1">Dimethylallyl diphosphate:tRNA dimethylallyltransferase</fullName>
        <shortName evidence="1">DMAPP:tRNA dimethylallyltransferase</shortName>
        <shortName evidence="1">DMATase</shortName>
    </alternativeName>
    <alternativeName>
        <fullName evidence="1">Isopentenyl-diphosphate:tRNA isopentenyltransferase</fullName>
        <shortName evidence="1">IPP transferase</shortName>
        <shortName evidence="1">IPPT</shortName>
        <shortName evidence="1">IPTase</shortName>
    </alternativeName>
</protein>
<organism>
    <name type="scientific">Chloroflexus aurantiacus (strain ATCC 29364 / DSM 637 / Y-400-fl)</name>
    <dbReference type="NCBI Taxonomy" id="480224"/>
    <lineage>
        <taxon>Bacteria</taxon>
        <taxon>Bacillati</taxon>
        <taxon>Chloroflexota</taxon>
        <taxon>Chloroflexia</taxon>
        <taxon>Chloroflexales</taxon>
        <taxon>Chloroflexineae</taxon>
        <taxon>Chloroflexaceae</taxon>
        <taxon>Chloroflexus</taxon>
    </lineage>
</organism>
<evidence type="ECO:0000255" key="1">
    <source>
        <dbReference type="HAMAP-Rule" id="MF_00185"/>
    </source>
</evidence>
<proteinExistence type="inferred from homology"/>
<accession>B9LI82</accession>
<sequence length="296" mass="33372">MEELIAIVGPTAVGKTELAVAWARRINGEIVSADSRQIYRWMDIGTAKPSPEEQAQAPHHLIDIRDPDQPFSLAEFCDLATAAIADIRGRGRIPLLVGGTGQYLAAFLEGWQVPRVAPQPDLRAELELIAAREGPAVLHARLAAVDPVAASRIPPTNVRRVVRALEVYLVSGEPISRLQERKEPPFRPRTIWLHRPRAELYARADARIERMIAAGLVEEVAGLLARGYDWSLPAMSSLGYIQFRPYFTGEADLPTCIERLRFDTHAFIRRQEMWFRRLPNLEIWTPDHPSWREITA</sequence>
<name>MIAA_CHLSY</name>
<dbReference type="EC" id="2.5.1.75" evidence="1"/>
<dbReference type="EMBL" id="CP001364">
    <property type="protein sequence ID" value="ACM51817.1"/>
    <property type="molecule type" value="Genomic_DNA"/>
</dbReference>
<dbReference type="SMR" id="B9LI82"/>
<dbReference type="KEGG" id="chl:Chy400_0378"/>
<dbReference type="HOGENOM" id="CLU_032616_0_1_0"/>
<dbReference type="OrthoDB" id="9776390at2"/>
<dbReference type="GO" id="GO:0005524">
    <property type="term" value="F:ATP binding"/>
    <property type="evidence" value="ECO:0007669"/>
    <property type="project" value="UniProtKB-UniRule"/>
</dbReference>
<dbReference type="GO" id="GO:0052381">
    <property type="term" value="F:tRNA dimethylallyltransferase activity"/>
    <property type="evidence" value="ECO:0007669"/>
    <property type="project" value="UniProtKB-UniRule"/>
</dbReference>
<dbReference type="GO" id="GO:0006400">
    <property type="term" value="P:tRNA modification"/>
    <property type="evidence" value="ECO:0007669"/>
    <property type="project" value="TreeGrafter"/>
</dbReference>
<dbReference type="FunFam" id="1.10.20.140:FF:000001">
    <property type="entry name" value="tRNA dimethylallyltransferase"/>
    <property type="match status" value="1"/>
</dbReference>
<dbReference type="Gene3D" id="1.10.20.140">
    <property type="match status" value="1"/>
</dbReference>
<dbReference type="Gene3D" id="3.40.50.300">
    <property type="entry name" value="P-loop containing nucleotide triphosphate hydrolases"/>
    <property type="match status" value="1"/>
</dbReference>
<dbReference type="HAMAP" id="MF_00185">
    <property type="entry name" value="IPP_trans"/>
    <property type="match status" value="1"/>
</dbReference>
<dbReference type="InterPro" id="IPR039657">
    <property type="entry name" value="Dimethylallyltransferase"/>
</dbReference>
<dbReference type="InterPro" id="IPR018022">
    <property type="entry name" value="IPT"/>
</dbReference>
<dbReference type="InterPro" id="IPR027417">
    <property type="entry name" value="P-loop_NTPase"/>
</dbReference>
<dbReference type="NCBIfam" id="TIGR00174">
    <property type="entry name" value="miaA"/>
    <property type="match status" value="1"/>
</dbReference>
<dbReference type="PANTHER" id="PTHR11088">
    <property type="entry name" value="TRNA DIMETHYLALLYLTRANSFERASE"/>
    <property type="match status" value="1"/>
</dbReference>
<dbReference type="PANTHER" id="PTHR11088:SF60">
    <property type="entry name" value="TRNA DIMETHYLALLYLTRANSFERASE"/>
    <property type="match status" value="1"/>
</dbReference>
<dbReference type="Pfam" id="PF01715">
    <property type="entry name" value="IPPT"/>
    <property type="match status" value="1"/>
</dbReference>
<dbReference type="SUPFAM" id="SSF52540">
    <property type="entry name" value="P-loop containing nucleoside triphosphate hydrolases"/>
    <property type="match status" value="2"/>
</dbReference>
<gene>
    <name evidence="1" type="primary">miaA</name>
    <name type="ordered locus">Chy400_0378</name>
</gene>
<feature type="chain" id="PRO_0000377120" description="tRNA dimethylallyltransferase">
    <location>
        <begin position="1"/>
        <end position="296"/>
    </location>
</feature>
<feature type="region of interest" description="Interaction with substrate tRNA" evidence="1">
    <location>
        <begin position="34"/>
        <end position="37"/>
    </location>
</feature>
<feature type="binding site" evidence="1">
    <location>
        <begin position="9"/>
        <end position="16"/>
    </location>
    <ligand>
        <name>ATP</name>
        <dbReference type="ChEBI" id="CHEBI:30616"/>
    </ligand>
</feature>
<feature type="binding site" evidence="1">
    <location>
        <begin position="11"/>
        <end position="16"/>
    </location>
    <ligand>
        <name>substrate</name>
    </ligand>
</feature>
<feature type="site" description="Interaction with substrate tRNA" evidence="1">
    <location>
        <position position="100"/>
    </location>
</feature>
<feature type="site" description="Interaction with substrate tRNA" evidence="1">
    <location>
        <position position="123"/>
    </location>
</feature>
<keyword id="KW-0067">ATP-binding</keyword>
<keyword id="KW-0460">Magnesium</keyword>
<keyword id="KW-0547">Nucleotide-binding</keyword>
<keyword id="KW-0808">Transferase</keyword>
<keyword id="KW-0819">tRNA processing</keyword>